<accession>Q21W38</accession>
<feature type="chain" id="PRO_0000242855" description="ATP phosphoribosyltransferase regulatory subunit">
    <location>
        <begin position="1"/>
        <end position="382"/>
    </location>
</feature>
<comment type="function">
    <text evidence="1">Required for the first step of histidine biosynthesis. May allow the feedback regulation of ATP phosphoribosyltransferase activity by histidine.</text>
</comment>
<comment type="pathway">
    <text evidence="1">Amino-acid biosynthesis; L-histidine biosynthesis; L-histidine from 5-phospho-alpha-D-ribose 1-diphosphate: step 1/9.</text>
</comment>
<comment type="subunit">
    <text evidence="1">Heteromultimer composed of HisG and HisZ subunits.</text>
</comment>
<comment type="subcellular location">
    <subcellularLocation>
        <location evidence="1">Cytoplasm</location>
    </subcellularLocation>
</comment>
<comment type="miscellaneous">
    <text>This function is generally fulfilled by the C-terminal part of HisG, which is missing in some bacteria such as this one.</text>
</comment>
<comment type="similarity">
    <text evidence="1">Belongs to the class-II aminoacyl-tRNA synthetase family. HisZ subfamily.</text>
</comment>
<reference key="1">
    <citation type="submission" date="2006-02" db="EMBL/GenBank/DDBJ databases">
        <title>Complete sequence of chromosome of Rhodoferax ferrireducens DSM 15236.</title>
        <authorList>
            <person name="Copeland A."/>
            <person name="Lucas S."/>
            <person name="Lapidus A."/>
            <person name="Barry K."/>
            <person name="Detter J.C."/>
            <person name="Glavina del Rio T."/>
            <person name="Hammon N."/>
            <person name="Israni S."/>
            <person name="Pitluck S."/>
            <person name="Brettin T."/>
            <person name="Bruce D."/>
            <person name="Han C."/>
            <person name="Tapia R."/>
            <person name="Gilna P."/>
            <person name="Kiss H."/>
            <person name="Schmutz J."/>
            <person name="Larimer F."/>
            <person name="Land M."/>
            <person name="Kyrpides N."/>
            <person name="Ivanova N."/>
            <person name="Richardson P."/>
        </authorList>
    </citation>
    <scope>NUCLEOTIDE SEQUENCE [LARGE SCALE GENOMIC DNA]</scope>
    <source>
        <strain>ATCC BAA-621 / DSM 15236 / T118</strain>
    </source>
</reference>
<sequence>MSAWVLPDHIADVLPSEARHIEELRRSLLDTARCYGYELVMPPLLEHLESLLTGAGAALDLQTFKLVDQLSGRMMGLRADSTPQVARIDAHLLNRPGVTRLCYCGPVLHTRPGAPHASREPLQFGAEIYGHAGLEADLEILMLALDCLKVVKVASPSVDLADARIVHALLKGVPVEIALAEQIYAALAAKDASELAVLTKKFPSSSRQGLLALVQLYGDEKVLLEAEKALQPLPAITESLSNLKWLASQLDGAKVSFDLADLRGYAYYTGTRFSIYAAGASDALVRGGRYDEVGAVFGRNRPAAGFSLDVKALVGVLPARPLRAAIRAPWREAADLRVAIASLRAQGETVVCVLPGHESEVDEFRCDRELVPRNGQWIVASI</sequence>
<keyword id="KW-0028">Amino-acid biosynthesis</keyword>
<keyword id="KW-0963">Cytoplasm</keyword>
<keyword id="KW-0368">Histidine biosynthesis</keyword>
<keyword id="KW-1185">Reference proteome</keyword>
<protein>
    <recommendedName>
        <fullName evidence="1">ATP phosphoribosyltransferase regulatory subunit</fullName>
    </recommendedName>
</protein>
<organism>
    <name type="scientific">Albidiferax ferrireducens (strain ATCC BAA-621 / DSM 15236 / T118)</name>
    <name type="common">Rhodoferax ferrireducens</name>
    <dbReference type="NCBI Taxonomy" id="338969"/>
    <lineage>
        <taxon>Bacteria</taxon>
        <taxon>Pseudomonadati</taxon>
        <taxon>Pseudomonadota</taxon>
        <taxon>Betaproteobacteria</taxon>
        <taxon>Burkholderiales</taxon>
        <taxon>Comamonadaceae</taxon>
        <taxon>Rhodoferax</taxon>
    </lineage>
</organism>
<dbReference type="EMBL" id="CP000267">
    <property type="protein sequence ID" value="ABD70015.1"/>
    <property type="molecule type" value="Genomic_DNA"/>
</dbReference>
<dbReference type="RefSeq" id="WP_011464583.1">
    <property type="nucleotide sequence ID" value="NC_007908.1"/>
</dbReference>
<dbReference type="SMR" id="Q21W38"/>
<dbReference type="STRING" id="338969.Rfer_2297"/>
<dbReference type="KEGG" id="rfr:Rfer_2297"/>
<dbReference type="eggNOG" id="COG3705">
    <property type="taxonomic scope" value="Bacteria"/>
</dbReference>
<dbReference type="HOGENOM" id="CLU_025113_0_1_4"/>
<dbReference type="OrthoDB" id="9769617at2"/>
<dbReference type="UniPathway" id="UPA00031">
    <property type="reaction ID" value="UER00006"/>
</dbReference>
<dbReference type="Proteomes" id="UP000008332">
    <property type="component" value="Chromosome"/>
</dbReference>
<dbReference type="GO" id="GO:0005737">
    <property type="term" value="C:cytoplasm"/>
    <property type="evidence" value="ECO:0007669"/>
    <property type="project" value="UniProtKB-SubCell"/>
</dbReference>
<dbReference type="GO" id="GO:0004821">
    <property type="term" value="F:histidine-tRNA ligase activity"/>
    <property type="evidence" value="ECO:0007669"/>
    <property type="project" value="TreeGrafter"/>
</dbReference>
<dbReference type="GO" id="GO:0006427">
    <property type="term" value="P:histidyl-tRNA aminoacylation"/>
    <property type="evidence" value="ECO:0007669"/>
    <property type="project" value="TreeGrafter"/>
</dbReference>
<dbReference type="GO" id="GO:0000105">
    <property type="term" value="P:L-histidine biosynthetic process"/>
    <property type="evidence" value="ECO:0007669"/>
    <property type="project" value="UniProtKB-UniRule"/>
</dbReference>
<dbReference type="CDD" id="cd00773">
    <property type="entry name" value="HisRS-like_core"/>
    <property type="match status" value="1"/>
</dbReference>
<dbReference type="Gene3D" id="3.30.930.10">
    <property type="entry name" value="Bira Bifunctional Protein, Domain 2"/>
    <property type="match status" value="1"/>
</dbReference>
<dbReference type="HAMAP" id="MF_00125">
    <property type="entry name" value="HisZ"/>
    <property type="match status" value="1"/>
</dbReference>
<dbReference type="InterPro" id="IPR045864">
    <property type="entry name" value="aa-tRNA-synth_II/BPL/LPL"/>
</dbReference>
<dbReference type="InterPro" id="IPR041715">
    <property type="entry name" value="HisRS-like_core"/>
</dbReference>
<dbReference type="InterPro" id="IPR004516">
    <property type="entry name" value="HisRS/HisZ"/>
</dbReference>
<dbReference type="InterPro" id="IPR004517">
    <property type="entry name" value="HisZ"/>
</dbReference>
<dbReference type="NCBIfam" id="TIGR00443">
    <property type="entry name" value="hisZ_biosyn_reg"/>
    <property type="match status" value="1"/>
</dbReference>
<dbReference type="NCBIfam" id="NF008935">
    <property type="entry name" value="PRK12292.1-1"/>
    <property type="match status" value="1"/>
</dbReference>
<dbReference type="NCBIfam" id="NF009086">
    <property type="entry name" value="PRK12421.1"/>
    <property type="match status" value="1"/>
</dbReference>
<dbReference type="PANTHER" id="PTHR43707:SF1">
    <property type="entry name" value="HISTIDINE--TRNA LIGASE, MITOCHONDRIAL-RELATED"/>
    <property type="match status" value="1"/>
</dbReference>
<dbReference type="PANTHER" id="PTHR43707">
    <property type="entry name" value="HISTIDYL-TRNA SYNTHETASE"/>
    <property type="match status" value="1"/>
</dbReference>
<dbReference type="Pfam" id="PF13393">
    <property type="entry name" value="tRNA-synt_His"/>
    <property type="match status" value="1"/>
</dbReference>
<dbReference type="PIRSF" id="PIRSF001549">
    <property type="entry name" value="His-tRNA_synth"/>
    <property type="match status" value="1"/>
</dbReference>
<dbReference type="SUPFAM" id="SSF55681">
    <property type="entry name" value="Class II aaRS and biotin synthetases"/>
    <property type="match status" value="1"/>
</dbReference>
<evidence type="ECO:0000255" key="1">
    <source>
        <dbReference type="HAMAP-Rule" id="MF_00125"/>
    </source>
</evidence>
<name>HISZ_ALBFT</name>
<gene>
    <name evidence="1" type="primary">hisZ</name>
    <name type="ordered locus">Rfer_2297</name>
</gene>
<proteinExistence type="inferred from homology"/>